<evidence type="ECO:0000250" key="1"/>
<evidence type="ECO:0000250" key="2">
    <source>
        <dbReference type="UniProtKB" id="P0AFX0"/>
    </source>
</evidence>
<evidence type="ECO:0000305" key="3"/>
<name>HPF_SALTY</name>
<proteinExistence type="inferred from homology"/>
<dbReference type="EMBL" id="M68571">
    <property type="protein sequence ID" value="AAA27225.1"/>
    <property type="molecule type" value="Genomic_DNA"/>
</dbReference>
<dbReference type="EMBL" id="AE006468">
    <property type="protein sequence ID" value="AAL22190.1"/>
    <property type="molecule type" value="Genomic_DNA"/>
</dbReference>
<dbReference type="PIR" id="B41026">
    <property type="entry name" value="B41026"/>
</dbReference>
<dbReference type="RefSeq" id="WP_001176589.1">
    <property type="nucleotide sequence ID" value="NC_003197.2"/>
</dbReference>
<dbReference type="SMR" id="P26983"/>
<dbReference type="STRING" id="99287.STM3321"/>
<dbReference type="PaxDb" id="99287-STM3321"/>
<dbReference type="GeneID" id="66757660"/>
<dbReference type="KEGG" id="stm:STM3321"/>
<dbReference type="PATRIC" id="fig|99287.12.peg.3522"/>
<dbReference type="HOGENOM" id="CLU_071472_3_1_6"/>
<dbReference type="OMA" id="NLTGHHI"/>
<dbReference type="PhylomeDB" id="P26983"/>
<dbReference type="BioCyc" id="SENT99287:STM3321-MONOMER"/>
<dbReference type="Proteomes" id="UP000001014">
    <property type="component" value="Chromosome"/>
</dbReference>
<dbReference type="GO" id="GO:0022627">
    <property type="term" value="C:cytosolic small ribosomal subunit"/>
    <property type="evidence" value="ECO:0000318"/>
    <property type="project" value="GO_Central"/>
</dbReference>
<dbReference type="GO" id="GO:0043024">
    <property type="term" value="F:ribosomal small subunit binding"/>
    <property type="evidence" value="ECO:0000318"/>
    <property type="project" value="GO_Central"/>
</dbReference>
<dbReference type="GO" id="GO:0045900">
    <property type="term" value="P:negative regulation of translational elongation"/>
    <property type="evidence" value="ECO:0000318"/>
    <property type="project" value="GO_Central"/>
</dbReference>
<dbReference type="CDD" id="cd00552">
    <property type="entry name" value="RaiA"/>
    <property type="match status" value="1"/>
</dbReference>
<dbReference type="FunFam" id="3.30.160.100:FF:000001">
    <property type="entry name" value="Ribosome hibernation promoting factor"/>
    <property type="match status" value="1"/>
</dbReference>
<dbReference type="Gene3D" id="3.30.160.100">
    <property type="entry name" value="Ribosome hibernation promotion factor-like"/>
    <property type="match status" value="1"/>
</dbReference>
<dbReference type="InterPro" id="IPR050574">
    <property type="entry name" value="HPF/YfiA_ribosome-assoc"/>
</dbReference>
<dbReference type="InterPro" id="IPR036567">
    <property type="entry name" value="RHF-like"/>
</dbReference>
<dbReference type="InterPro" id="IPR003489">
    <property type="entry name" value="RHF/RaiA"/>
</dbReference>
<dbReference type="NCBIfam" id="NF007780">
    <property type="entry name" value="PRK10470.1"/>
    <property type="match status" value="1"/>
</dbReference>
<dbReference type="NCBIfam" id="TIGR00741">
    <property type="entry name" value="yfiA"/>
    <property type="match status" value="1"/>
</dbReference>
<dbReference type="PANTHER" id="PTHR33231">
    <property type="entry name" value="30S RIBOSOMAL PROTEIN"/>
    <property type="match status" value="1"/>
</dbReference>
<dbReference type="PANTHER" id="PTHR33231:SF1">
    <property type="entry name" value="30S RIBOSOMAL PROTEIN"/>
    <property type="match status" value="1"/>
</dbReference>
<dbReference type="Pfam" id="PF02482">
    <property type="entry name" value="Ribosomal_S30AE"/>
    <property type="match status" value="1"/>
</dbReference>
<dbReference type="SUPFAM" id="SSF69754">
    <property type="entry name" value="Ribosome binding protein Y (YfiA homologue)"/>
    <property type="match status" value="1"/>
</dbReference>
<feature type="chain" id="PRO_0000097426" description="Ribosome hibernation promoting factor">
    <location>
        <begin position="1"/>
        <end position="95"/>
    </location>
</feature>
<protein>
    <recommendedName>
        <fullName>Ribosome hibernation promoting factor</fullName>
        <shortName>HPF</shortName>
    </recommendedName>
    <alternativeName>
        <fullName>Hibernation factor HPF</fullName>
    </alternativeName>
</protein>
<reference key="1">
    <citation type="journal article" date="1991" name="J. Biol. Chem.">
        <title>Purification of the alternative sigma factor, sigma 54, from Salmonella typhimurium and characterization of sigma 54-holoenzyme.</title>
        <authorList>
            <person name="Popham D.L."/>
            <person name="Keener J."/>
            <person name="Kustu S."/>
        </authorList>
    </citation>
    <scope>NUCLEOTIDE SEQUENCE [GENOMIC DNA]</scope>
</reference>
<reference key="2">
    <citation type="journal article" date="2001" name="Nature">
        <title>Complete genome sequence of Salmonella enterica serovar Typhimurium LT2.</title>
        <authorList>
            <person name="McClelland M."/>
            <person name="Sanderson K.E."/>
            <person name="Spieth J."/>
            <person name="Clifton S.W."/>
            <person name="Latreille P."/>
            <person name="Courtney L."/>
            <person name="Porwollik S."/>
            <person name="Ali J."/>
            <person name="Dante M."/>
            <person name="Du F."/>
            <person name="Hou S."/>
            <person name="Layman D."/>
            <person name="Leonard S."/>
            <person name="Nguyen C."/>
            <person name="Scott K."/>
            <person name="Holmes A."/>
            <person name="Grewal N."/>
            <person name="Mulvaney E."/>
            <person name="Ryan E."/>
            <person name="Sun H."/>
            <person name="Florea L."/>
            <person name="Miller W."/>
            <person name="Stoneking T."/>
            <person name="Nhan M."/>
            <person name="Waterston R."/>
            <person name="Wilson R.K."/>
        </authorList>
    </citation>
    <scope>NUCLEOTIDE SEQUENCE [LARGE SCALE GENOMIC DNA]</scope>
    <source>
        <strain>LT2 / SGSC1412 / ATCC 700720</strain>
    </source>
</reference>
<comment type="function">
    <text evidence="2">During stationary phase, promotes and stabilizes dimerization of 70S ribosomes by the ribosome modulation factor (RMF), leading to the formation of inactive 100S ribosomes.</text>
</comment>
<comment type="subunit">
    <text evidence="2">Associates exclusively with 100S ribosomes, which are dimers of 70S ribosomes.</text>
</comment>
<comment type="induction">
    <text evidence="1">Induced during stationary growth phase.</text>
</comment>
<comment type="similarity">
    <text evidence="3">Belongs to the HPF/YfiA ribosome-associated protein family. Short HPF subfamily.</text>
</comment>
<organism>
    <name type="scientific">Salmonella typhimurium (strain LT2 / SGSC1412 / ATCC 700720)</name>
    <dbReference type="NCBI Taxonomy" id="99287"/>
    <lineage>
        <taxon>Bacteria</taxon>
        <taxon>Pseudomonadati</taxon>
        <taxon>Pseudomonadota</taxon>
        <taxon>Gammaproteobacteria</taxon>
        <taxon>Enterobacterales</taxon>
        <taxon>Enterobacteriaceae</taxon>
        <taxon>Salmonella</taxon>
    </lineage>
</organism>
<sequence>MQLNITGHNVEITEALREFVTTKFAKLEQYFERINQVYVVLKVEKVTHISDATLHVNGGEIHASAEGQDMYAAIDGLIDKLARQLTRHKDKLKQH</sequence>
<accession>P26983</accession>
<gene>
    <name type="primary">hpf</name>
    <name type="ordered locus">STM3321</name>
</gene>
<keyword id="KW-1185">Reference proteome</keyword>
<keyword id="KW-0810">Translation regulation</keyword>